<dbReference type="EMBL" id="AL123456">
    <property type="protein sequence ID" value="CCP43262.1"/>
    <property type="molecule type" value="Genomic_DNA"/>
</dbReference>
<dbReference type="PIR" id="H70544">
    <property type="entry name" value="H70544"/>
</dbReference>
<dbReference type="RefSeq" id="NP_215039.1">
    <property type="nucleotide sequence ID" value="NC_000962.3"/>
</dbReference>
<dbReference type="RefSeq" id="WP_003402845.1">
    <property type="nucleotide sequence ID" value="NZ_NVQJ01000068.1"/>
</dbReference>
<dbReference type="SMR" id="O06391"/>
<dbReference type="FunCoup" id="O06391">
    <property type="interactions" value="1"/>
</dbReference>
<dbReference type="STRING" id="83332.Rv0525"/>
<dbReference type="PaxDb" id="83332-Rv0525"/>
<dbReference type="DNASU" id="887358"/>
<dbReference type="GeneID" id="887358"/>
<dbReference type="KEGG" id="mtu:Rv0525"/>
<dbReference type="KEGG" id="mtv:RVBD_0525"/>
<dbReference type="TubercuList" id="Rv0525"/>
<dbReference type="eggNOG" id="COG0406">
    <property type="taxonomic scope" value="Bacteria"/>
</dbReference>
<dbReference type="InParanoid" id="O06391"/>
<dbReference type="OrthoDB" id="3215466at2"/>
<dbReference type="PhylomeDB" id="O06391"/>
<dbReference type="Proteomes" id="UP000001584">
    <property type="component" value="Chromosome"/>
</dbReference>
<dbReference type="GO" id="GO:0005737">
    <property type="term" value="C:cytoplasm"/>
    <property type="evidence" value="ECO:0000318"/>
    <property type="project" value="GO_Central"/>
</dbReference>
<dbReference type="GO" id="GO:0005886">
    <property type="term" value="C:plasma membrane"/>
    <property type="evidence" value="ECO:0007005"/>
    <property type="project" value="MTBBASE"/>
</dbReference>
<dbReference type="GO" id="GO:0016791">
    <property type="term" value="F:phosphatase activity"/>
    <property type="evidence" value="ECO:0000318"/>
    <property type="project" value="GO_Central"/>
</dbReference>
<dbReference type="FunFam" id="3.40.50.1240:FF:000072">
    <property type="entry name" value="Histidine phosphatase family protein"/>
    <property type="match status" value="1"/>
</dbReference>
<dbReference type="Gene3D" id="3.40.50.1240">
    <property type="entry name" value="Phosphoglycerate mutase-like"/>
    <property type="match status" value="1"/>
</dbReference>
<dbReference type="InterPro" id="IPR013078">
    <property type="entry name" value="His_Pase_superF_clade-1"/>
</dbReference>
<dbReference type="InterPro" id="IPR029033">
    <property type="entry name" value="His_PPase_superfam"/>
</dbReference>
<dbReference type="InterPro" id="IPR050275">
    <property type="entry name" value="PGM_Phosphatase"/>
</dbReference>
<dbReference type="PANTHER" id="PTHR48100">
    <property type="entry name" value="BROAD-SPECIFICITY PHOSPHATASE YOR283W-RELATED"/>
    <property type="match status" value="1"/>
</dbReference>
<dbReference type="PANTHER" id="PTHR48100:SF51">
    <property type="entry name" value="PHOSPHOGLYCERATE MUTASE"/>
    <property type="match status" value="1"/>
</dbReference>
<dbReference type="Pfam" id="PF00300">
    <property type="entry name" value="His_Phos_1"/>
    <property type="match status" value="1"/>
</dbReference>
<dbReference type="SMART" id="SM00855">
    <property type="entry name" value="PGAM"/>
    <property type="match status" value="1"/>
</dbReference>
<dbReference type="SUPFAM" id="SSF53254">
    <property type="entry name" value="Phosphoglycerate mutase-like"/>
    <property type="match status" value="1"/>
</dbReference>
<proteinExistence type="evidence at protein level"/>
<feature type="chain" id="PRO_0000396087" description="Uncharacterized protein Rv0525">
    <location>
        <begin position="1"/>
        <end position="202"/>
    </location>
</feature>
<feature type="cross-link" description="Isoglutamyl lysine isopeptide (Lys-Gln) (interchain with Q-Cter in protein Pup)" evidence="1">
    <location>
        <position position="136"/>
    </location>
</feature>
<organism>
    <name type="scientific">Mycobacterium tuberculosis (strain ATCC 25618 / H37Rv)</name>
    <dbReference type="NCBI Taxonomy" id="83332"/>
    <lineage>
        <taxon>Bacteria</taxon>
        <taxon>Bacillati</taxon>
        <taxon>Actinomycetota</taxon>
        <taxon>Actinomycetes</taxon>
        <taxon>Mycobacteriales</taxon>
        <taxon>Mycobacteriaceae</taxon>
        <taxon>Mycobacterium</taxon>
        <taxon>Mycobacterium tuberculosis complex</taxon>
    </lineage>
</organism>
<name>Y525_MYCTU</name>
<keyword id="KW-1017">Isopeptide bond</keyword>
<keyword id="KW-1185">Reference proteome</keyword>
<keyword id="KW-0832">Ubl conjugation</keyword>
<gene>
    <name type="ordered locus">Rv0525</name>
</gene>
<reference key="1">
    <citation type="journal article" date="1998" name="Nature">
        <title>Deciphering the biology of Mycobacterium tuberculosis from the complete genome sequence.</title>
        <authorList>
            <person name="Cole S.T."/>
            <person name="Brosch R."/>
            <person name="Parkhill J."/>
            <person name="Garnier T."/>
            <person name="Churcher C.M."/>
            <person name="Harris D.E."/>
            <person name="Gordon S.V."/>
            <person name="Eiglmeier K."/>
            <person name="Gas S."/>
            <person name="Barry C.E. III"/>
            <person name="Tekaia F."/>
            <person name="Badcock K."/>
            <person name="Basham D."/>
            <person name="Brown D."/>
            <person name="Chillingworth T."/>
            <person name="Connor R."/>
            <person name="Davies R.M."/>
            <person name="Devlin K."/>
            <person name="Feltwell T."/>
            <person name="Gentles S."/>
            <person name="Hamlin N."/>
            <person name="Holroyd S."/>
            <person name="Hornsby T."/>
            <person name="Jagels K."/>
            <person name="Krogh A."/>
            <person name="McLean J."/>
            <person name="Moule S."/>
            <person name="Murphy L.D."/>
            <person name="Oliver S."/>
            <person name="Osborne J."/>
            <person name="Quail M.A."/>
            <person name="Rajandream M.A."/>
            <person name="Rogers J."/>
            <person name="Rutter S."/>
            <person name="Seeger K."/>
            <person name="Skelton S."/>
            <person name="Squares S."/>
            <person name="Squares R."/>
            <person name="Sulston J.E."/>
            <person name="Taylor K."/>
            <person name="Whitehead S."/>
            <person name="Barrell B.G."/>
        </authorList>
    </citation>
    <scope>NUCLEOTIDE SEQUENCE [LARGE SCALE GENOMIC DNA]</scope>
    <source>
        <strain>ATCC 25618 / H37Rv</strain>
    </source>
</reference>
<reference key="2">
    <citation type="journal article" date="2008" name="BMC Syst. Biol.">
        <title>targetTB: a target identification pipeline for Mycobacterium tuberculosis through an interactome, reactome and genome-scale structural analysis.</title>
        <authorList>
            <person name="Raman K."/>
            <person name="Yeturu K."/>
            <person name="Chandra N."/>
        </authorList>
    </citation>
    <scope>IDENTIFICATION AS A DRUG TARGET [LARGE SCALE ANALYSIS]</scope>
</reference>
<reference key="3">
    <citation type="journal article" date="2010" name="PLoS ONE">
        <title>Prokaryotic ubiquitin-like protein (Pup) proteome of Mycobacterium tuberculosis.</title>
        <authorList>
            <person name="Festa R.A."/>
            <person name="McAllister F."/>
            <person name="Pearce M.J."/>
            <person name="Mintseris J."/>
            <person name="Burns K.E."/>
            <person name="Gygi S.P."/>
            <person name="Darwin K.H."/>
        </authorList>
    </citation>
    <scope>PUPYLATION AT LYS-136</scope>
    <scope>IDENTIFICATION BY MASS SPECTROMETRY</scope>
    <source>
        <strain>ATCC 25618 / H37Rv</strain>
    </source>
</reference>
<reference key="4">
    <citation type="journal article" date="2011" name="Mol. Cell. Proteomics">
        <title>Proteogenomic analysis of Mycobacterium tuberculosis by high resolution mass spectrometry.</title>
        <authorList>
            <person name="Kelkar D.S."/>
            <person name="Kumar D."/>
            <person name="Kumar P."/>
            <person name="Balakrishnan L."/>
            <person name="Muthusamy B."/>
            <person name="Yadav A.K."/>
            <person name="Shrivastava P."/>
            <person name="Marimuthu A."/>
            <person name="Anand S."/>
            <person name="Sundaram H."/>
            <person name="Kingsbury R."/>
            <person name="Harsha H.C."/>
            <person name="Nair B."/>
            <person name="Prasad T.S."/>
            <person name="Chauhan D.S."/>
            <person name="Katoch K."/>
            <person name="Katoch V.M."/>
            <person name="Kumar P."/>
            <person name="Chaerkady R."/>
            <person name="Ramachandran S."/>
            <person name="Dash D."/>
            <person name="Pandey A."/>
        </authorList>
    </citation>
    <scope>IDENTIFICATION BY MASS SPECTROMETRY [LARGE SCALE ANALYSIS]</scope>
    <source>
        <strain>ATCC 25618 / H37Rv</strain>
    </source>
</reference>
<protein>
    <recommendedName>
        <fullName>Uncharacterized protein Rv0525</fullName>
    </recommendedName>
</protein>
<evidence type="ECO:0000269" key="1">
    <source>
    </source>
</evidence>
<sequence length="202" mass="22212">MPEETQVHVVRHGEVHNPTGILYGRLPGFHLSATGAAQAAAVADALADRDIVAVIASPLQRAQETAAPIAARHDLAVETDPDLIESANFFEGRRVGPGDGAWRDPRVWWQLRNPFTPSWGEPYVDIAARMTTAVDKARVRGAGHEVVCVSHQLPVWTLRLYLTGKRLWHDPRRRDCALASVTSLIYDGDRLVDVVYSQPAAL</sequence>
<accession>O06391</accession>
<accession>L0T6Y2</accession>